<protein>
    <recommendedName>
        <fullName evidence="1">Methionine aminopeptidase 2-1</fullName>
        <shortName evidence="1">MAP 2-1</shortName>
        <shortName evidence="1">MetAP 2-1</shortName>
        <ecNumber evidence="1">3.4.11.18</ecNumber>
    </recommendedName>
    <alternativeName>
        <fullName evidence="1">Peptidase M</fullName>
    </alternativeName>
</protein>
<proteinExistence type="inferred from homology"/>
<name>MAP21_NEOFI</name>
<organism>
    <name type="scientific">Neosartorya fischeri (strain ATCC 1020 / DSM 3700 / CBS 544.65 / FGSC A1164 / JCM 1740 / NRRL 181 / WB 181)</name>
    <name type="common">Aspergillus fischerianus</name>
    <dbReference type="NCBI Taxonomy" id="331117"/>
    <lineage>
        <taxon>Eukaryota</taxon>
        <taxon>Fungi</taxon>
        <taxon>Dikarya</taxon>
        <taxon>Ascomycota</taxon>
        <taxon>Pezizomycotina</taxon>
        <taxon>Eurotiomycetes</taxon>
        <taxon>Eurotiomycetidae</taxon>
        <taxon>Eurotiales</taxon>
        <taxon>Aspergillaceae</taxon>
        <taxon>Aspergillus</taxon>
        <taxon>Aspergillus subgen. Fumigati</taxon>
    </lineage>
</organism>
<reference key="1">
    <citation type="journal article" date="2008" name="PLoS Genet.">
        <title>Genomic islands in the pathogenic filamentous fungus Aspergillus fumigatus.</title>
        <authorList>
            <person name="Fedorova N.D."/>
            <person name="Khaldi N."/>
            <person name="Joardar V.S."/>
            <person name="Maiti R."/>
            <person name="Amedeo P."/>
            <person name="Anderson M.J."/>
            <person name="Crabtree J."/>
            <person name="Silva J.C."/>
            <person name="Badger J.H."/>
            <person name="Albarraq A."/>
            <person name="Angiuoli S."/>
            <person name="Bussey H."/>
            <person name="Bowyer P."/>
            <person name="Cotty P.J."/>
            <person name="Dyer P.S."/>
            <person name="Egan A."/>
            <person name="Galens K."/>
            <person name="Fraser-Liggett C.M."/>
            <person name="Haas B.J."/>
            <person name="Inman J.M."/>
            <person name="Kent R."/>
            <person name="Lemieux S."/>
            <person name="Malavazi I."/>
            <person name="Orvis J."/>
            <person name="Roemer T."/>
            <person name="Ronning C.M."/>
            <person name="Sundaram J.P."/>
            <person name="Sutton G."/>
            <person name="Turner G."/>
            <person name="Venter J.C."/>
            <person name="White O.R."/>
            <person name="Whitty B.R."/>
            <person name="Youngman P."/>
            <person name="Wolfe K.H."/>
            <person name="Goldman G.H."/>
            <person name="Wortman J.R."/>
            <person name="Jiang B."/>
            <person name="Denning D.W."/>
            <person name="Nierman W.C."/>
        </authorList>
    </citation>
    <scope>NUCLEOTIDE SEQUENCE [LARGE SCALE GENOMIC DNA]</scope>
    <source>
        <strain>ATCC 1020 / DSM 3700 / CBS 544.65 / FGSC A1164 / JCM 1740 / NRRL 181 / WB 181</strain>
    </source>
</reference>
<evidence type="ECO:0000255" key="1">
    <source>
        <dbReference type="HAMAP-Rule" id="MF_03175"/>
    </source>
</evidence>
<evidence type="ECO:0000256" key="2">
    <source>
        <dbReference type="SAM" id="MobiDB-lite"/>
    </source>
</evidence>
<gene>
    <name type="ORF">NFIA_109310</name>
</gene>
<keyword id="KW-0031">Aminopeptidase</keyword>
<keyword id="KW-0963">Cytoplasm</keyword>
<keyword id="KW-0378">Hydrolase</keyword>
<keyword id="KW-0479">Metal-binding</keyword>
<keyword id="KW-0645">Protease</keyword>
<keyword id="KW-1185">Reference proteome</keyword>
<accession>A1CXT5</accession>
<dbReference type="EC" id="3.4.11.18" evidence="1"/>
<dbReference type="EMBL" id="DS027685">
    <property type="protein sequence ID" value="EAW25437.1"/>
    <property type="molecule type" value="Genomic_DNA"/>
</dbReference>
<dbReference type="RefSeq" id="XP_001267334.1">
    <property type="nucleotide sequence ID" value="XM_001267333.1"/>
</dbReference>
<dbReference type="SMR" id="A1CXT5"/>
<dbReference type="STRING" id="331117.A1CXT5"/>
<dbReference type="MEROPS" id="M24.002"/>
<dbReference type="EnsemblFungi" id="EAW25437">
    <property type="protein sequence ID" value="EAW25437"/>
    <property type="gene ID" value="NFIA_109310"/>
</dbReference>
<dbReference type="GeneID" id="4593305"/>
<dbReference type="KEGG" id="nfi:NFIA_109310"/>
<dbReference type="VEuPathDB" id="FungiDB:NFIA_109310"/>
<dbReference type="eggNOG" id="KOG2775">
    <property type="taxonomic scope" value="Eukaryota"/>
</dbReference>
<dbReference type="HOGENOM" id="CLU_015857_7_1_1"/>
<dbReference type="OMA" id="PFAKRWL"/>
<dbReference type="OrthoDB" id="7848262at2759"/>
<dbReference type="Proteomes" id="UP000006702">
    <property type="component" value="Unassembled WGS sequence"/>
</dbReference>
<dbReference type="GO" id="GO:0005737">
    <property type="term" value="C:cytoplasm"/>
    <property type="evidence" value="ECO:0007669"/>
    <property type="project" value="UniProtKB-SubCell"/>
</dbReference>
<dbReference type="GO" id="GO:0004239">
    <property type="term" value="F:initiator methionyl aminopeptidase activity"/>
    <property type="evidence" value="ECO:0007669"/>
    <property type="project" value="UniProtKB-UniRule"/>
</dbReference>
<dbReference type="GO" id="GO:0046872">
    <property type="term" value="F:metal ion binding"/>
    <property type="evidence" value="ECO:0007669"/>
    <property type="project" value="UniProtKB-UniRule"/>
</dbReference>
<dbReference type="GO" id="GO:0070006">
    <property type="term" value="F:metalloaminopeptidase activity"/>
    <property type="evidence" value="ECO:0007669"/>
    <property type="project" value="UniProtKB-UniRule"/>
</dbReference>
<dbReference type="GO" id="GO:0006508">
    <property type="term" value="P:proteolysis"/>
    <property type="evidence" value="ECO:0007669"/>
    <property type="project" value="UniProtKB-KW"/>
</dbReference>
<dbReference type="CDD" id="cd01088">
    <property type="entry name" value="MetAP2"/>
    <property type="match status" value="1"/>
</dbReference>
<dbReference type="FunFam" id="1.10.10.10:FF:000370">
    <property type="entry name" value="Methionine aminopeptidase 2"/>
    <property type="match status" value="1"/>
</dbReference>
<dbReference type="Gene3D" id="3.90.230.10">
    <property type="entry name" value="Creatinase/methionine aminopeptidase superfamily"/>
    <property type="match status" value="1"/>
</dbReference>
<dbReference type="Gene3D" id="1.10.10.10">
    <property type="entry name" value="Winged helix-like DNA-binding domain superfamily/Winged helix DNA-binding domain"/>
    <property type="match status" value="1"/>
</dbReference>
<dbReference type="HAMAP" id="MF_03175">
    <property type="entry name" value="MetAP_2_euk"/>
    <property type="match status" value="1"/>
</dbReference>
<dbReference type="InterPro" id="IPR036005">
    <property type="entry name" value="Creatinase/aminopeptidase-like"/>
</dbReference>
<dbReference type="InterPro" id="IPR050247">
    <property type="entry name" value="Met_Aminopeptidase_Type2"/>
</dbReference>
<dbReference type="InterPro" id="IPR000994">
    <property type="entry name" value="Pept_M24"/>
</dbReference>
<dbReference type="InterPro" id="IPR001714">
    <property type="entry name" value="Pept_M24_MAP"/>
</dbReference>
<dbReference type="InterPro" id="IPR002468">
    <property type="entry name" value="Pept_M24A_MAP2"/>
</dbReference>
<dbReference type="InterPro" id="IPR018349">
    <property type="entry name" value="Pept_M24A_MAP2_BS"/>
</dbReference>
<dbReference type="InterPro" id="IPR036388">
    <property type="entry name" value="WH-like_DNA-bd_sf"/>
</dbReference>
<dbReference type="InterPro" id="IPR036390">
    <property type="entry name" value="WH_DNA-bd_sf"/>
</dbReference>
<dbReference type="NCBIfam" id="TIGR00501">
    <property type="entry name" value="met_pdase_II"/>
    <property type="match status" value="1"/>
</dbReference>
<dbReference type="PANTHER" id="PTHR45777">
    <property type="entry name" value="METHIONINE AMINOPEPTIDASE 2"/>
    <property type="match status" value="1"/>
</dbReference>
<dbReference type="PANTHER" id="PTHR45777:SF2">
    <property type="entry name" value="METHIONINE AMINOPEPTIDASE 2"/>
    <property type="match status" value="1"/>
</dbReference>
<dbReference type="Pfam" id="PF00557">
    <property type="entry name" value="Peptidase_M24"/>
    <property type="match status" value="1"/>
</dbReference>
<dbReference type="PRINTS" id="PR00599">
    <property type="entry name" value="MAPEPTIDASE"/>
</dbReference>
<dbReference type="SUPFAM" id="SSF55920">
    <property type="entry name" value="Creatinase/aminopeptidase"/>
    <property type="match status" value="1"/>
</dbReference>
<dbReference type="SUPFAM" id="SSF46785">
    <property type="entry name" value="Winged helix' DNA-binding domain"/>
    <property type="match status" value="1"/>
</dbReference>
<dbReference type="PROSITE" id="PS01202">
    <property type="entry name" value="MAP_2"/>
    <property type="match status" value="1"/>
</dbReference>
<comment type="function">
    <text evidence="1">Cotranslationally removes the N-terminal methionine from nascent proteins. The N-terminal methionine is often cleaved when the second residue in the primary sequence is small and uncharged (Met-Ala-, Cys, Gly, Pro, Ser, Thr, or Val).</text>
</comment>
<comment type="catalytic activity">
    <reaction evidence="1">
        <text>Release of N-terminal amino acids, preferentially methionine, from peptides and arylamides.</text>
        <dbReference type="EC" id="3.4.11.18"/>
    </reaction>
</comment>
<comment type="cofactor">
    <cofactor evidence="1">
        <name>Co(2+)</name>
        <dbReference type="ChEBI" id="CHEBI:48828"/>
    </cofactor>
    <cofactor evidence="1">
        <name>Zn(2+)</name>
        <dbReference type="ChEBI" id="CHEBI:29105"/>
    </cofactor>
    <cofactor evidence="1">
        <name>Mn(2+)</name>
        <dbReference type="ChEBI" id="CHEBI:29035"/>
    </cofactor>
    <cofactor evidence="1">
        <name>Fe(2+)</name>
        <dbReference type="ChEBI" id="CHEBI:29033"/>
    </cofactor>
    <text evidence="1">Binds 2 divalent metal cations per subunit. Has a high-affinity and a low affinity metal-binding site. The true nature of the physiological cofactor is under debate. The enzyme is active with cobalt, zinc, manganese or divalent iron ions. Most likely, methionine aminopeptidases function as mononuclear Fe(2+)-metalloproteases under physiological conditions, and the catalytically relevant metal-binding site has been assigned to the histidine-containing high-affinity site.</text>
</comment>
<comment type="subcellular location">
    <subcellularLocation>
        <location evidence="1">Cytoplasm</location>
    </subcellularLocation>
</comment>
<comment type="similarity">
    <text evidence="1">Belongs to the peptidase M24A family. Methionine aminopeptidase eukaryotic type 2 subfamily.</text>
</comment>
<feature type="chain" id="PRO_0000407631" description="Methionine aminopeptidase 2-1">
    <location>
        <begin position="1"/>
        <end position="444"/>
    </location>
</feature>
<feature type="region of interest" description="Disordered" evidence="2">
    <location>
        <begin position="1"/>
        <end position="92"/>
    </location>
</feature>
<feature type="compositionally biased region" description="Polar residues" evidence="2">
    <location>
        <begin position="15"/>
        <end position="29"/>
    </location>
</feature>
<feature type="compositionally biased region" description="Acidic residues" evidence="2">
    <location>
        <begin position="34"/>
        <end position="45"/>
    </location>
</feature>
<feature type="compositionally biased region" description="Basic residues" evidence="2">
    <location>
        <begin position="59"/>
        <end position="73"/>
    </location>
</feature>
<feature type="binding site" evidence="1">
    <location>
        <position position="197"/>
    </location>
    <ligand>
        <name>substrate</name>
    </ligand>
</feature>
<feature type="binding site" evidence="1">
    <location>
        <position position="217"/>
    </location>
    <ligand>
        <name>a divalent metal cation</name>
        <dbReference type="ChEBI" id="CHEBI:60240"/>
        <label>1</label>
    </ligand>
</feature>
<feature type="binding site" evidence="1">
    <location>
        <position position="228"/>
    </location>
    <ligand>
        <name>a divalent metal cation</name>
        <dbReference type="ChEBI" id="CHEBI:60240"/>
        <label>1</label>
    </ligand>
</feature>
<feature type="binding site" evidence="1">
    <location>
        <position position="228"/>
    </location>
    <ligand>
        <name>a divalent metal cation</name>
        <dbReference type="ChEBI" id="CHEBI:60240"/>
        <label>2</label>
        <note>catalytic</note>
    </ligand>
</feature>
<feature type="binding site" evidence="1">
    <location>
        <position position="297"/>
    </location>
    <ligand>
        <name>a divalent metal cation</name>
        <dbReference type="ChEBI" id="CHEBI:60240"/>
        <label>2</label>
        <note>catalytic</note>
    </ligand>
</feature>
<feature type="binding site" evidence="1">
    <location>
        <position position="305"/>
    </location>
    <ligand>
        <name>substrate</name>
    </ligand>
</feature>
<feature type="binding site" evidence="1">
    <location>
        <position position="330"/>
    </location>
    <ligand>
        <name>a divalent metal cation</name>
        <dbReference type="ChEBI" id="CHEBI:60240"/>
        <label>2</label>
        <note>catalytic</note>
    </ligand>
</feature>
<feature type="binding site" evidence="1">
    <location>
        <position position="425"/>
    </location>
    <ligand>
        <name>a divalent metal cation</name>
        <dbReference type="ChEBI" id="CHEBI:60240"/>
        <label>1</label>
    </ligand>
</feature>
<feature type="binding site" evidence="1">
    <location>
        <position position="425"/>
    </location>
    <ligand>
        <name>a divalent metal cation</name>
        <dbReference type="ChEBI" id="CHEBI:60240"/>
        <label>2</label>
        <note>catalytic</note>
    </ligand>
</feature>
<sequence>MAAQVTEKLQDLHLNGQNGDAKANSTAVGQTEAGEAEDDSDDEKEDGNAAPEAGAGGAAKKKKRKSKKKKKGGAKVQSSPPRVPVSNLFPNNQYPEGEIVEYKNENSYRTTNEEKRYLDRMNNDFLQEYRQAAEVHRQVRQYAQRTIKPGQTLTEIAEGIEDAVRALTGHQGLEEGDNLKGGMGFPCGLSINHCAAHYTPNAGNKMVLQQGDVMKVDFGAHINGRIVDSAFTMTFDPVYDPLLEAVKDATNTGIREAGIDVRMSDIGAAIQEAMESYEVELNGTMYPVKCIRNLNGHNIDQHIIHGGKSVPIVKGSDQTKMEEGETFAIETFGSTGKGYVREDMETSHYALIPDAPSVPLRLSSAKNLLNVINKNFGTLPFCRRYLDRLGQEKYLLGLNNLVSSGIVQDYPPLCDVKGSYTAQFEHTILLRPTVKEVISRGDDY</sequence>